<sequence>MSSLLQGVNLYLIGMMGAGKTTVGHLLAKELGYGFLDTDNVIAQATKKSINEIFAEAGEAGFRQIESDVLAQVCSYTKLTVATGGGIVLRRENWSYLHHGLILWLDVPVDILYARLAADTTRPLLQDDDPKGKLRSLLEQRTPLYSQADLRICVNAEETPEQIANKVMQAIPSVLKQTASN</sequence>
<organism>
    <name type="scientific">Nostoc sp. (strain PCC 7120 / SAG 25.82 / UTEX 2576)</name>
    <dbReference type="NCBI Taxonomy" id="103690"/>
    <lineage>
        <taxon>Bacteria</taxon>
        <taxon>Bacillati</taxon>
        <taxon>Cyanobacteriota</taxon>
        <taxon>Cyanophyceae</taxon>
        <taxon>Nostocales</taxon>
        <taxon>Nostocaceae</taxon>
        <taxon>Nostoc</taxon>
    </lineage>
</organism>
<comment type="function">
    <text evidence="1">Catalyzes the specific phosphorylation of the 3-hydroxyl group of shikimic acid using ATP as a cosubstrate.</text>
</comment>
<comment type="catalytic activity">
    <reaction evidence="1">
        <text>shikimate + ATP = 3-phosphoshikimate + ADP + H(+)</text>
        <dbReference type="Rhea" id="RHEA:13121"/>
        <dbReference type="ChEBI" id="CHEBI:15378"/>
        <dbReference type="ChEBI" id="CHEBI:30616"/>
        <dbReference type="ChEBI" id="CHEBI:36208"/>
        <dbReference type="ChEBI" id="CHEBI:145989"/>
        <dbReference type="ChEBI" id="CHEBI:456216"/>
        <dbReference type="EC" id="2.7.1.71"/>
    </reaction>
</comment>
<comment type="cofactor">
    <cofactor evidence="1">
        <name>Mg(2+)</name>
        <dbReference type="ChEBI" id="CHEBI:18420"/>
    </cofactor>
    <text evidence="1">Binds 1 Mg(2+) ion per subunit.</text>
</comment>
<comment type="pathway">
    <text evidence="1">Metabolic intermediate biosynthesis; chorismate biosynthesis; chorismate from D-erythrose 4-phosphate and phosphoenolpyruvate: step 5/7.</text>
</comment>
<comment type="subunit">
    <text evidence="1">Monomer.</text>
</comment>
<comment type="subcellular location">
    <subcellularLocation>
        <location evidence="1">Cytoplasm</location>
    </subcellularLocation>
</comment>
<comment type="similarity">
    <text evidence="1">Belongs to the shikimate kinase family.</text>
</comment>
<feature type="chain" id="PRO_0000192365" description="Shikimate kinase">
    <location>
        <begin position="1"/>
        <end position="181"/>
    </location>
</feature>
<feature type="binding site" evidence="1">
    <location>
        <begin position="17"/>
        <end position="22"/>
    </location>
    <ligand>
        <name>ATP</name>
        <dbReference type="ChEBI" id="CHEBI:30616"/>
    </ligand>
</feature>
<feature type="binding site" evidence="1">
    <location>
        <position position="21"/>
    </location>
    <ligand>
        <name>Mg(2+)</name>
        <dbReference type="ChEBI" id="CHEBI:18420"/>
    </ligand>
</feature>
<feature type="binding site" evidence="1">
    <location>
        <position position="39"/>
    </location>
    <ligand>
        <name>substrate</name>
    </ligand>
</feature>
<feature type="binding site" evidence="1">
    <location>
        <position position="63"/>
    </location>
    <ligand>
        <name>substrate</name>
    </ligand>
</feature>
<feature type="binding site" evidence="1">
    <location>
        <position position="85"/>
    </location>
    <ligand>
        <name>substrate</name>
    </ligand>
</feature>
<feature type="binding site" evidence="1">
    <location>
        <position position="122"/>
    </location>
    <ligand>
        <name>ATP</name>
        <dbReference type="ChEBI" id="CHEBI:30616"/>
    </ligand>
</feature>
<feature type="binding site" evidence="1">
    <location>
        <position position="141"/>
    </location>
    <ligand>
        <name>substrate</name>
    </ligand>
</feature>
<reference key="1">
    <citation type="journal article" date="2001" name="DNA Res.">
        <title>Complete genomic sequence of the filamentous nitrogen-fixing cyanobacterium Anabaena sp. strain PCC 7120.</title>
        <authorList>
            <person name="Kaneko T."/>
            <person name="Nakamura Y."/>
            <person name="Wolk C.P."/>
            <person name="Kuritz T."/>
            <person name="Sasamoto S."/>
            <person name="Watanabe A."/>
            <person name="Iriguchi M."/>
            <person name="Ishikawa A."/>
            <person name="Kawashima K."/>
            <person name="Kimura T."/>
            <person name="Kishida Y."/>
            <person name="Kohara M."/>
            <person name="Matsumoto M."/>
            <person name="Matsuno A."/>
            <person name="Muraki A."/>
            <person name="Nakazaki N."/>
            <person name="Shimpo S."/>
            <person name="Sugimoto M."/>
            <person name="Takazawa M."/>
            <person name="Yamada M."/>
            <person name="Yasuda M."/>
            <person name="Tabata S."/>
        </authorList>
    </citation>
    <scope>NUCLEOTIDE SEQUENCE [LARGE SCALE GENOMIC DNA]</scope>
    <source>
        <strain>PCC 7120 / SAG 25.82 / UTEX 2576</strain>
    </source>
</reference>
<name>AROK_NOSS1</name>
<keyword id="KW-0028">Amino-acid biosynthesis</keyword>
<keyword id="KW-0057">Aromatic amino acid biosynthesis</keyword>
<keyword id="KW-0067">ATP-binding</keyword>
<keyword id="KW-0963">Cytoplasm</keyword>
<keyword id="KW-0418">Kinase</keyword>
<keyword id="KW-0460">Magnesium</keyword>
<keyword id="KW-0479">Metal-binding</keyword>
<keyword id="KW-0547">Nucleotide-binding</keyword>
<keyword id="KW-1185">Reference proteome</keyword>
<keyword id="KW-0808">Transferase</keyword>
<protein>
    <recommendedName>
        <fullName evidence="1">Shikimate kinase</fullName>
        <shortName evidence="1">SK</shortName>
        <ecNumber evidence="1">2.7.1.71</ecNumber>
    </recommendedName>
</protein>
<evidence type="ECO:0000255" key="1">
    <source>
        <dbReference type="HAMAP-Rule" id="MF_00109"/>
    </source>
</evidence>
<proteinExistence type="inferred from homology"/>
<gene>
    <name evidence="1" type="primary">aroK</name>
    <name type="ordered locus">alr1244</name>
</gene>
<dbReference type="EC" id="2.7.1.71" evidence="1"/>
<dbReference type="EMBL" id="BA000019">
    <property type="protein sequence ID" value="BAB73201.1"/>
    <property type="molecule type" value="Genomic_DNA"/>
</dbReference>
<dbReference type="PIR" id="AI1961">
    <property type="entry name" value="AI1961"/>
</dbReference>
<dbReference type="RefSeq" id="WP_010995416.1">
    <property type="nucleotide sequence ID" value="NZ_RSCN01000021.1"/>
</dbReference>
<dbReference type="SMR" id="Q8YXG9"/>
<dbReference type="STRING" id="103690.gene:10493258"/>
<dbReference type="KEGG" id="ana:alr1244"/>
<dbReference type="eggNOG" id="COG0703">
    <property type="taxonomic scope" value="Bacteria"/>
</dbReference>
<dbReference type="OrthoDB" id="9800332at2"/>
<dbReference type="UniPathway" id="UPA00053">
    <property type="reaction ID" value="UER00088"/>
</dbReference>
<dbReference type="Proteomes" id="UP000002483">
    <property type="component" value="Chromosome"/>
</dbReference>
<dbReference type="GO" id="GO:0005829">
    <property type="term" value="C:cytosol"/>
    <property type="evidence" value="ECO:0007669"/>
    <property type="project" value="TreeGrafter"/>
</dbReference>
<dbReference type="GO" id="GO:0005524">
    <property type="term" value="F:ATP binding"/>
    <property type="evidence" value="ECO:0007669"/>
    <property type="project" value="UniProtKB-UniRule"/>
</dbReference>
<dbReference type="GO" id="GO:0000287">
    <property type="term" value="F:magnesium ion binding"/>
    <property type="evidence" value="ECO:0007669"/>
    <property type="project" value="UniProtKB-UniRule"/>
</dbReference>
<dbReference type="GO" id="GO:0004765">
    <property type="term" value="F:shikimate kinase activity"/>
    <property type="evidence" value="ECO:0007669"/>
    <property type="project" value="UniProtKB-UniRule"/>
</dbReference>
<dbReference type="GO" id="GO:0008652">
    <property type="term" value="P:amino acid biosynthetic process"/>
    <property type="evidence" value="ECO:0007669"/>
    <property type="project" value="UniProtKB-KW"/>
</dbReference>
<dbReference type="GO" id="GO:0009073">
    <property type="term" value="P:aromatic amino acid family biosynthetic process"/>
    <property type="evidence" value="ECO:0007669"/>
    <property type="project" value="UniProtKB-KW"/>
</dbReference>
<dbReference type="GO" id="GO:0009423">
    <property type="term" value="P:chorismate biosynthetic process"/>
    <property type="evidence" value="ECO:0007669"/>
    <property type="project" value="UniProtKB-UniRule"/>
</dbReference>
<dbReference type="CDD" id="cd00464">
    <property type="entry name" value="SK"/>
    <property type="match status" value="1"/>
</dbReference>
<dbReference type="Gene3D" id="3.40.50.300">
    <property type="entry name" value="P-loop containing nucleotide triphosphate hydrolases"/>
    <property type="match status" value="1"/>
</dbReference>
<dbReference type="HAMAP" id="MF_00109">
    <property type="entry name" value="Shikimate_kinase"/>
    <property type="match status" value="1"/>
</dbReference>
<dbReference type="InterPro" id="IPR027417">
    <property type="entry name" value="P-loop_NTPase"/>
</dbReference>
<dbReference type="InterPro" id="IPR031322">
    <property type="entry name" value="Shikimate/glucono_kinase"/>
</dbReference>
<dbReference type="InterPro" id="IPR000623">
    <property type="entry name" value="Shikimate_kinase/TSH1"/>
</dbReference>
<dbReference type="PANTHER" id="PTHR21087">
    <property type="entry name" value="SHIKIMATE KINASE"/>
    <property type="match status" value="1"/>
</dbReference>
<dbReference type="PANTHER" id="PTHR21087:SF16">
    <property type="entry name" value="SHIKIMATE KINASE 1, CHLOROPLASTIC"/>
    <property type="match status" value="1"/>
</dbReference>
<dbReference type="Pfam" id="PF01202">
    <property type="entry name" value="SKI"/>
    <property type="match status" value="1"/>
</dbReference>
<dbReference type="PRINTS" id="PR01100">
    <property type="entry name" value="SHIKIMTKNASE"/>
</dbReference>
<dbReference type="SUPFAM" id="SSF52540">
    <property type="entry name" value="P-loop containing nucleoside triphosphate hydrolases"/>
    <property type="match status" value="1"/>
</dbReference>
<accession>Q8YXG9</accession>